<proteinExistence type="evidence at protein level"/>
<feature type="signal peptide" evidence="2">
    <location>
        <begin position="1"/>
        <end position="55"/>
    </location>
</feature>
<feature type="chain" id="PRO_0000277806" description="E3 ubiquitin-protein ligase ZNRF3">
    <location>
        <begin position="56"/>
        <end position="936"/>
    </location>
</feature>
<feature type="topological domain" description="Extracellular" evidence="2">
    <location>
        <begin position="56"/>
        <end position="219"/>
    </location>
</feature>
<feature type="transmembrane region" description="Helical" evidence="2">
    <location>
        <begin position="220"/>
        <end position="240"/>
    </location>
</feature>
<feature type="topological domain" description="Cytoplasmic" evidence="2">
    <location>
        <begin position="241"/>
        <end position="936"/>
    </location>
</feature>
<feature type="zinc finger region" description="RING-type; atypical" evidence="3">
    <location>
        <begin position="293"/>
        <end position="334"/>
    </location>
</feature>
<feature type="region of interest" description="Disordered" evidence="4">
    <location>
        <begin position="1"/>
        <end position="31"/>
    </location>
</feature>
<feature type="region of interest" description="Disordered" evidence="4">
    <location>
        <begin position="608"/>
        <end position="693"/>
    </location>
</feature>
<feature type="region of interest" description="Disordered" evidence="4">
    <location>
        <begin position="739"/>
        <end position="758"/>
    </location>
</feature>
<feature type="region of interest" description="Disordered" evidence="4">
    <location>
        <begin position="849"/>
        <end position="875"/>
    </location>
</feature>
<feature type="region of interest" description="Disordered" evidence="4">
    <location>
        <begin position="892"/>
        <end position="936"/>
    </location>
</feature>
<feature type="compositionally biased region" description="Basic residues" evidence="4">
    <location>
        <begin position="13"/>
        <end position="27"/>
    </location>
</feature>
<feature type="compositionally biased region" description="Polar residues" evidence="4">
    <location>
        <begin position="654"/>
        <end position="684"/>
    </location>
</feature>
<feature type="compositionally biased region" description="Low complexity" evidence="4">
    <location>
        <begin position="913"/>
        <end position="922"/>
    </location>
</feature>
<feature type="splice variant" id="VSP_044043" description="In isoform 2." evidence="7">
    <location>
        <begin position="1"/>
        <end position="100"/>
    </location>
</feature>
<feature type="mutagenesis site" description="Abolishes interaction with RSPO1 and prevents subsequent membrane clearance." evidence="5">
    <original>P</original>
    <variation>A</variation>
    <location>
        <position position="103"/>
    </location>
</feature>
<feature type="strand" evidence="9">
    <location>
        <begin position="58"/>
        <end position="68"/>
    </location>
</feature>
<feature type="strand" evidence="9">
    <location>
        <begin position="74"/>
        <end position="85"/>
    </location>
</feature>
<feature type="strand" evidence="9">
    <location>
        <begin position="94"/>
        <end position="100"/>
    </location>
</feature>
<feature type="helix" evidence="9">
    <location>
        <begin position="103"/>
        <end position="107"/>
    </location>
</feature>
<feature type="helix" evidence="9">
    <location>
        <begin position="113"/>
        <end position="115"/>
    </location>
</feature>
<feature type="strand" evidence="9">
    <location>
        <begin position="118"/>
        <end position="125"/>
    </location>
</feature>
<feature type="helix" evidence="9">
    <location>
        <begin position="129"/>
        <end position="131"/>
    </location>
</feature>
<feature type="strand" evidence="12">
    <location>
        <begin position="132"/>
        <end position="134"/>
    </location>
</feature>
<feature type="helix" evidence="9">
    <location>
        <begin position="139"/>
        <end position="148"/>
    </location>
</feature>
<feature type="strand" evidence="9">
    <location>
        <begin position="151"/>
        <end position="157"/>
    </location>
</feature>
<feature type="helix" evidence="9">
    <location>
        <begin position="163"/>
        <end position="169"/>
    </location>
</feature>
<feature type="helix" evidence="10">
    <location>
        <begin position="171"/>
        <end position="173"/>
    </location>
</feature>
<feature type="strand" evidence="11">
    <location>
        <begin position="176"/>
        <end position="178"/>
    </location>
</feature>
<feature type="strand" evidence="9">
    <location>
        <begin position="180"/>
        <end position="183"/>
    </location>
</feature>
<feature type="helix" evidence="9">
    <location>
        <begin position="185"/>
        <end position="195"/>
    </location>
</feature>
<feature type="strand" evidence="9">
    <location>
        <begin position="201"/>
        <end position="207"/>
    </location>
</feature>
<feature type="helix" evidence="11">
    <location>
        <begin position="218"/>
        <end position="239"/>
    </location>
</feature>
<feature type="helix" evidence="11">
    <location>
        <begin position="241"/>
        <end position="244"/>
    </location>
</feature>
<accession>Q9ULT6</accession>
<accession>B3KU18</accession>
<accession>Q6ICH1</accession>
<accession>Q6NTF8</accession>
<accession>Q8WU18</accession>
<keyword id="KW-0002">3D-structure</keyword>
<keyword id="KW-0025">Alternative splicing</keyword>
<keyword id="KW-1003">Cell membrane</keyword>
<keyword id="KW-0217">Developmental protein</keyword>
<keyword id="KW-0472">Membrane</keyword>
<keyword id="KW-0479">Metal-binding</keyword>
<keyword id="KW-1267">Proteomics identification</keyword>
<keyword id="KW-1185">Reference proteome</keyword>
<keyword id="KW-0732">Signal</keyword>
<keyword id="KW-0808">Transferase</keyword>
<keyword id="KW-0812">Transmembrane</keyword>
<keyword id="KW-1133">Transmembrane helix</keyword>
<keyword id="KW-0833">Ubl conjugation pathway</keyword>
<keyword id="KW-0879">Wnt signaling pathway</keyword>
<keyword id="KW-0862">Zinc</keyword>
<keyword id="KW-0863">Zinc-finger</keyword>
<organism>
    <name type="scientific">Homo sapiens</name>
    <name type="common">Human</name>
    <dbReference type="NCBI Taxonomy" id="9606"/>
    <lineage>
        <taxon>Eukaryota</taxon>
        <taxon>Metazoa</taxon>
        <taxon>Chordata</taxon>
        <taxon>Craniata</taxon>
        <taxon>Vertebrata</taxon>
        <taxon>Euteleostomi</taxon>
        <taxon>Mammalia</taxon>
        <taxon>Eutheria</taxon>
        <taxon>Euarchontoglires</taxon>
        <taxon>Primates</taxon>
        <taxon>Haplorrhini</taxon>
        <taxon>Catarrhini</taxon>
        <taxon>Hominidae</taxon>
        <taxon>Homo</taxon>
    </lineage>
</organism>
<dbReference type="EC" id="2.3.2.27"/>
<dbReference type="EMBL" id="AK096397">
    <property type="protein sequence ID" value="BAG53280.1"/>
    <property type="molecule type" value="mRNA"/>
</dbReference>
<dbReference type="EMBL" id="Z95113">
    <property type="status" value="NOT_ANNOTATED_CDS"/>
    <property type="molecule type" value="Genomic_DNA"/>
</dbReference>
<dbReference type="EMBL" id="AL021393">
    <property type="status" value="NOT_ANNOTATED_CDS"/>
    <property type="molecule type" value="Genomic_DNA"/>
</dbReference>
<dbReference type="EMBL" id="AL031596">
    <property type="status" value="NOT_ANNOTATED_CDS"/>
    <property type="molecule type" value="Genomic_DNA"/>
</dbReference>
<dbReference type="EMBL" id="AB051436">
    <property type="protein sequence ID" value="BAB33319.1"/>
    <property type="molecule type" value="mRNA"/>
</dbReference>
<dbReference type="EMBL" id="CR456397">
    <property type="protein sequence ID" value="CAG30283.1"/>
    <property type="status" value="ALT_INIT"/>
    <property type="molecule type" value="mRNA"/>
</dbReference>
<dbReference type="EMBL" id="BC021570">
    <property type="protein sequence ID" value="AAH21570.1"/>
    <property type="molecule type" value="mRNA"/>
</dbReference>
<dbReference type="EMBL" id="BC069019">
    <property type="protein sequence ID" value="AAH69019.1"/>
    <property type="molecule type" value="mRNA"/>
</dbReference>
<dbReference type="EMBL" id="BC094857">
    <property type="protein sequence ID" value="AAH94857.1"/>
    <property type="molecule type" value="mRNA"/>
</dbReference>
<dbReference type="CCDS" id="CCDS42999.1">
    <molecule id="Q9ULT6-2"/>
</dbReference>
<dbReference type="CCDS" id="CCDS56225.1">
    <molecule id="Q9ULT6-1"/>
</dbReference>
<dbReference type="RefSeq" id="NP_001193927.1">
    <molecule id="Q9ULT6-1"/>
    <property type="nucleotide sequence ID" value="NM_001206998.2"/>
</dbReference>
<dbReference type="RefSeq" id="NP_115549.2">
    <molecule id="Q9ULT6-2"/>
    <property type="nucleotide sequence ID" value="NM_032173.3"/>
</dbReference>
<dbReference type="PDB" id="8G4Y">
    <property type="method" value="X-ray"/>
    <property type="resolution" value="1.41 A"/>
    <property type="chains" value="A=56-220"/>
</dbReference>
<dbReference type="PDB" id="8XFP">
    <property type="method" value="EM"/>
    <property type="resolution" value="3.21 A"/>
    <property type="chains" value="C/H=1-936"/>
</dbReference>
<dbReference type="PDB" id="8XFS">
    <property type="method" value="EM"/>
    <property type="resolution" value="3.20 A"/>
    <property type="chains" value="C/E=56-245"/>
</dbReference>
<dbReference type="PDB" id="8XFT">
    <property type="method" value="EM"/>
    <property type="resolution" value="3.24 A"/>
    <property type="chains" value="C=1-936"/>
</dbReference>
<dbReference type="PDB" id="8Y69">
    <property type="method" value="EM"/>
    <property type="resolution" value="3.38 A"/>
    <property type="chains" value="C/H=56-243"/>
</dbReference>
<dbReference type="PDBsum" id="8G4Y"/>
<dbReference type="PDBsum" id="8XFP"/>
<dbReference type="PDBsum" id="8XFS"/>
<dbReference type="PDBsum" id="8XFT"/>
<dbReference type="PDBsum" id="8Y69"/>
<dbReference type="EMDB" id="EMD-38307"/>
<dbReference type="EMDB" id="EMD-38308"/>
<dbReference type="EMDB" id="EMD-38309"/>
<dbReference type="EMDB" id="EMD-38982"/>
<dbReference type="SMR" id="Q9ULT6"/>
<dbReference type="BioGRID" id="123905">
    <property type="interactions" value="37"/>
</dbReference>
<dbReference type="DIP" id="DIP-50030N"/>
<dbReference type="FunCoup" id="Q9ULT6">
    <property type="interactions" value="997"/>
</dbReference>
<dbReference type="IntAct" id="Q9ULT6">
    <property type="interactions" value="18"/>
</dbReference>
<dbReference type="MINT" id="Q9ULT6"/>
<dbReference type="STRING" id="9606.ENSP00000443824"/>
<dbReference type="GlyGen" id="Q9ULT6">
    <property type="glycosylation" value="1 site, 1 N-linked glycan (1 site)"/>
</dbReference>
<dbReference type="iPTMnet" id="Q9ULT6"/>
<dbReference type="PhosphoSitePlus" id="Q9ULT6"/>
<dbReference type="BioMuta" id="ZNRF3"/>
<dbReference type="DMDM" id="126253847"/>
<dbReference type="jPOST" id="Q9ULT6"/>
<dbReference type="MassIVE" id="Q9ULT6"/>
<dbReference type="PaxDb" id="9606-ENSP00000443824"/>
<dbReference type="PeptideAtlas" id="Q9ULT6"/>
<dbReference type="ProteomicsDB" id="85106">
    <molecule id="Q9ULT6-1"/>
</dbReference>
<dbReference type="ProteomicsDB" id="85107">
    <molecule id="Q9ULT6-2"/>
</dbReference>
<dbReference type="ABCD" id="Q9ULT6">
    <property type="antibodies" value="8 sequenced antibodies"/>
</dbReference>
<dbReference type="Antibodypedia" id="48546">
    <property type="antibodies" value="82 antibodies from 16 providers"/>
</dbReference>
<dbReference type="DNASU" id="84133"/>
<dbReference type="Ensembl" id="ENST00000402174.5">
    <molecule id="Q9ULT6-2"/>
    <property type="protein sequence ID" value="ENSP00000384456.1"/>
    <property type="gene ID" value="ENSG00000183579.16"/>
</dbReference>
<dbReference type="Ensembl" id="ENST00000406323.3">
    <molecule id="Q9ULT6-2"/>
    <property type="protein sequence ID" value="ENSP00000384553.3"/>
    <property type="gene ID" value="ENSG00000183579.16"/>
</dbReference>
<dbReference type="Ensembl" id="ENST00000544604.7">
    <molecule id="Q9ULT6-1"/>
    <property type="protein sequence ID" value="ENSP00000443824.2"/>
    <property type="gene ID" value="ENSG00000183579.16"/>
</dbReference>
<dbReference type="GeneID" id="84133"/>
<dbReference type="KEGG" id="hsa:84133"/>
<dbReference type="MANE-Select" id="ENST00000544604.7">
    <property type="protein sequence ID" value="ENSP00000443824.2"/>
    <property type="RefSeq nucleotide sequence ID" value="NM_001206998.2"/>
    <property type="RefSeq protein sequence ID" value="NP_001193927.1"/>
</dbReference>
<dbReference type="UCSC" id="uc003aeg.4">
    <molecule id="Q9ULT6-1"/>
    <property type="organism name" value="human"/>
</dbReference>
<dbReference type="AGR" id="HGNC:18126"/>
<dbReference type="CTD" id="84133"/>
<dbReference type="DisGeNET" id="84133"/>
<dbReference type="GeneCards" id="ZNRF3"/>
<dbReference type="HGNC" id="HGNC:18126">
    <property type="gene designation" value="ZNRF3"/>
</dbReference>
<dbReference type="HPA" id="ENSG00000183579">
    <property type="expression patterns" value="Low tissue specificity"/>
</dbReference>
<dbReference type="MalaCards" id="ZNRF3"/>
<dbReference type="MIM" id="612062">
    <property type="type" value="gene"/>
</dbReference>
<dbReference type="neXtProt" id="NX_Q9ULT6"/>
<dbReference type="OpenTargets" id="ENSG00000183579"/>
<dbReference type="Orphanet" id="1501">
    <property type="disease" value="Adrenocortical carcinoma"/>
</dbReference>
<dbReference type="PharmGKB" id="PA134983897"/>
<dbReference type="VEuPathDB" id="HostDB:ENSG00000183579"/>
<dbReference type="eggNOG" id="KOG0800">
    <property type="taxonomic scope" value="Eukaryota"/>
</dbReference>
<dbReference type="GeneTree" id="ENSGT00940000154006"/>
<dbReference type="HOGENOM" id="CLU_018099_1_0_1"/>
<dbReference type="InParanoid" id="Q9ULT6"/>
<dbReference type="OMA" id="FQMHPLG"/>
<dbReference type="OrthoDB" id="8062037at2759"/>
<dbReference type="PAN-GO" id="Q9ULT6">
    <property type="GO annotations" value="6 GO annotations based on evolutionary models"/>
</dbReference>
<dbReference type="PhylomeDB" id="Q9ULT6"/>
<dbReference type="TreeFam" id="TF317074"/>
<dbReference type="PathwayCommons" id="Q9ULT6"/>
<dbReference type="Reactome" id="R-HSA-4641263">
    <property type="pathway name" value="Regulation of FZD by ubiquitination"/>
</dbReference>
<dbReference type="SignaLink" id="Q9ULT6"/>
<dbReference type="SIGNOR" id="Q9ULT6"/>
<dbReference type="UniPathway" id="UPA00143"/>
<dbReference type="BioGRID-ORCS" id="84133">
    <property type="hits" value="13 hits in 1212 CRISPR screens"/>
</dbReference>
<dbReference type="ChiTaRS" id="ZNRF3">
    <property type="organism name" value="human"/>
</dbReference>
<dbReference type="EvolutionaryTrace" id="Q9ULT6"/>
<dbReference type="GenomeRNAi" id="84133"/>
<dbReference type="Pharos" id="Q9ULT6">
    <property type="development level" value="Tbio"/>
</dbReference>
<dbReference type="PRO" id="PR:Q9ULT6"/>
<dbReference type="Proteomes" id="UP000005640">
    <property type="component" value="Chromosome 22"/>
</dbReference>
<dbReference type="RNAct" id="Q9ULT6">
    <property type="molecule type" value="protein"/>
</dbReference>
<dbReference type="Bgee" id="ENSG00000183579">
    <property type="expression patterns" value="Expressed in corpus epididymis and 177 other cell types or tissues"/>
</dbReference>
<dbReference type="ExpressionAtlas" id="Q9ULT6">
    <property type="expression patterns" value="baseline and differential"/>
</dbReference>
<dbReference type="GO" id="GO:0005886">
    <property type="term" value="C:plasma membrane"/>
    <property type="evidence" value="ECO:0000314"/>
    <property type="project" value="UniProtKB"/>
</dbReference>
<dbReference type="GO" id="GO:0005109">
    <property type="term" value="F:frizzled binding"/>
    <property type="evidence" value="ECO:0000353"/>
    <property type="project" value="UniProtKB"/>
</dbReference>
<dbReference type="GO" id="GO:0061630">
    <property type="term" value="F:ubiquitin protein ligase activity"/>
    <property type="evidence" value="ECO:0000318"/>
    <property type="project" value="GO_Central"/>
</dbReference>
<dbReference type="GO" id="GO:0004842">
    <property type="term" value="F:ubiquitin-protein transferase activity"/>
    <property type="evidence" value="ECO:0000314"/>
    <property type="project" value="UniProtKB"/>
</dbReference>
<dbReference type="GO" id="GO:0008270">
    <property type="term" value="F:zinc ion binding"/>
    <property type="evidence" value="ECO:0007669"/>
    <property type="project" value="UniProtKB-KW"/>
</dbReference>
<dbReference type="GO" id="GO:0060173">
    <property type="term" value="P:limb development"/>
    <property type="evidence" value="ECO:0000250"/>
    <property type="project" value="UniProtKB"/>
</dbReference>
<dbReference type="GO" id="GO:0090090">
    <property type="term" value="P:negative regulation of canonical Wnt signaling pathway"/>
    <property type="evidence" value="ECO:0000315"/>
    <property type="project" value="UniProtKB"/>
</dbReference>
<dbReference type="GO" id="GO:2000051">
    <property type="term" value="P:negative regulation of non-canonical Wnt signaling pathway"/>
    <property type="evidence" value="ECO:0000315"/>
    <property type="project" value="UniProtKB"/>
</dbReference>
<dbReference type="GO" id="GO:0016567">
    <property type="term" value="P:protein ubiquitination"/>
    <property type="evidence" value="ECO:0000314"/>
    <property type="project" value="UniProtKB"/>
</dbReference>
<dbReference type="GO" id="GO:2000095">
    <property type="term" value="P:regulation of Wnt signaling pathway, planar cell polarity pathway"/>
    <property type="evidence" value="ECO:0007669"/>
    <property type="project" value="Ensembl"/>
</dbReference>
<dbReference type="GO" id="GO:0072089">
    <property type="term" value="P:stem cell proliferation"/>
    <property type="evidence" value="ECO:0000250"/>
    <property type="project" value="UniProtKB"/>
</dbReference>
<dbReference type="GO" id="GO:0006511">
    <property type="term" value="P:ubiquitin-dependent protein catabolic process"/>
    <property type="evidence" value="ECO:0000315"/>
    <property type="project" value="UniProtKB"/>
</dbReference>
<dbReference type="GO" id="GO:0038018">
    <property type="term" value="P:Wnt receptor catabolic process"/>
    <property type="evidence" value="ECO:0000315"/>
    <property type="project" value="UniProtKB"/>
</dbReference>
<dbReference type="GO" id="GO:0016055">
    <property type="term" value="P:Wnt signaling pathway"/>
    <property type="evidence" value="ECO:0007669"/>
    <property type="project" value="UniProtKB-KW"/>
</dbReference>
<dbReference type="CDD" id="cd16799">
    <property type="entry name" value="RING-H2_ZNRF3"/>
    <property type="match status" value="1"/>
</dbReference>
<dbReference type="FunFam" id="3.50.30.30:FF:000018">
    <property type="entry name" value="E3 ubiquitin-protein ligase ZNRF3"/>
    <property type="match status" value="1"/>
</dbReference>
<dbReference type="FunFam" id="3.30.40.10:FF:000075">
    <property type="entry name" value="Putative e3 ubiquitin-protein ligase rnf43"/>
    <property type="match status" value="1"/>
</dbReference>
<dbReference type="Gene3D" id="3.50.30.30">
    <property type="match status" value="1"/>
</dbReference>
<dbReference type="Gene3D" id="3.30.40.10">
    <property type="entry name" value="Zinc/RING finger domain, C3HC4 (zinc finger)"/>
    <property type="match status" value="1"/>
</dbReference>
<dbReference type="InterPro" id="IPR001841">
    <property type="entry name" value="Znf_RING"/>
</dbReference>
<dbReference type="InterPro" id="IPR013083">
    <property type="entry name" value="Znf_RING/FYVE/PHD"/>
</dbReference>
<dbReference type="InterPro" id="IPR040700">
    <property type="entry name" value="ZNRF-3_ecto"/>
</dbReference>
<dbReference type="InterPro" id="IPR051073">
    <property type="entry name" value="ZNRF3_Arkadia_E3_ligases"/>
</dbReference>
<dbReference type="InterPro" id="IPR045903">
    <property type="entry name" value="ZNRF3_Znf_RING"/>
</dbReference>
<dbReference type="PANTHER" id="PTHR16200">
    <property type="entry name" value="RING ZINC FINGER"/>
    <property type="match status" value="1"/>
</dbReference>
<dbReference type="Pfam" id="PF13639">
    <property type="entry name" value="zf-RING_2"/>
    <property type="match status" value="1"/>
</dbReference>
<dbReference type="Pfam" id="PF18212">
    <property type="entry name" value="ZNRF_3_ecto"/>
    <property type="match status" value="1"/>
</dbReference>
<dbReference type="SMART" id="SM00184">
    <property type="entry name" value="RING"/>
    <property type="match status" value="1"/>
</dbReference>
<dbReference type="SUPFAM" id="SSF57850">
    <property type="entry name" value="RING/U-box"/>
    <property type="match status" value="1"/>
</dbReference>
<dbReference type="PROSITE" id="PS50089">
    <property type="entry name" value="ZF_RING_2"/>
    <property type="match status" value="1"/>
</dbReference>
<name>ZNRF3_HUMAN</name>
<evidence type="ECO:0000250" key="1">
    <source>
        <dbReference type="UniProtKB" id="Q08D68"/>
    </source>
</evidence>
<evidence type="ECO:0000255" key="2"/>
<evidence type="ECO:0000255" key="3">
    <source>
        <dbReference type="PROSITE-ProRule" id="PRU00175"/>
    </source>
</evidence>
<evidence type="ECO:0000256" key="4">
    <source>
        <dbReference type="SAM" id="MobiDB-lite"/>
    </source>
</evidence>
<evidence type="ECO:0000269" key="5">
    <source>
    </source>
</evidence>
<evidence type="ECO:0000269" key="6">
    <source>
    </source>
</evidence>
<evidence type="ECO:0000305" key="7"/>
<evidence type="ECO:0000305" key="8">
    <source>
    </source>
</evidence>
<evidence type="ECO:0007829" key="9">
    <source>
        <dbReference type="PDB" id="8G4Y"/>
    </source>
</evidence>
<evidence type="ECO:0007829" key="10">
    <source>
        <dbReference type="PDB" id="8XFP"/>
    </source>
</evidence>
<evidence type="ECO:0007829" key="11">
    <source>
        <dbReference type="PDB" id="8XFS"/>
    </source>
</evidence>
<evidence type="ECO:0007829" key="12">
    <source>
        <dbReference type="PDB" id="8Y69"/>
    </source>
</evidence>
<protein>
    <recommendedName>
        <fullName>E3 ubiquitin-protein ligase ZNRF3</fullName>
        <ecNumber>2.3.2.27</ecNumber>
    </recommendedName>
    <alternativeName>
        <fullName>RING finger protein 203</fullName>
    </alternativeName>
    <alternativeName>
        <fullName>RING-type E3 ubiquitin transferase ZNRF3</fullName>
    </alternativeName>
    <alternativeName>
        <fullName>Zinc/RING finger protein 3</fullName>
    </alternativeName>
</protein>
<sequence length="936" mass="100574">MRPRSGGRPGATGRRRRRLRRRPRGLRCSRLPPPPPLPLLLGLLLAAAGPGAARAKETAFVEVVLFESSPSGDYTTYTTGLTGRFSRAGATLSAEGEIVQMHPLGLCNNNDEEDLYEYGWVGVVKLEQPELDPKPCLTVLGKAKRAVQRGATAVIFDVSENPEAIDQLNQGSEDPLKRPVVYVKGADAIKLMNIVNKQKVARARIQHRPPRQPTEYFDMGIFLAFFVVVSLVCLILLVKIKLKQRRSQNSMNRLAVQALEKMETRKFNSKSKGRREGSCGALDTLSSSSTSDCAICLEKYIDGEELRVIPCTHRFHRKCVDPWLLQHHTCPHCRHNIIEQKGNPSAVCVETSNLSRGRQQRVTLPVHYPGRVHRTNAIPAYPTRTSMDSHGNPVTLLTMDRHGEQSLYSPQTPAYIRSYPPLHLDHSLAAHRCGLEHRAYSPAHPFRRPKLSGRSFSKAACFSQYETMYQHYYFQGLSYPEQEGQSPPSLAPRGPARAFPPSGSGSLLFPTVVHVAPPSHLESGSTSSFSCYHGHRSVCSGYLADCPGSDSSSSSSSGQCHCSSSDSVVDCTEVSNQGVYGSCSTFRSSLSSDYDPFIYRSRSPCRASEAGGSGSSGRGPALCFEGSPPPEELPAVHSHGAGRGEPWPGPASPSGDQVSTCSLEMNYSSNSSLEHRGPNSSTSEVGLEASPGAAPDLRRTWKGGHELPSCACCCEPQPSPAGPSAGAAGSSTLFLGPHLYEGSGPAGGEPQSGSSQGLYGLHPDHLPRTDGVKYEGLPCCFYEEKQVARGGGGGSGCYTEDYSVSVQYTLTEEPPPGCYPGARDLSQRIPIIPEDVDCDLGLPSDCQGTHSLGSWGGTRGPDTPRPHRGLGATREEERALCCQARALLRPGCPPEEAGAVRANFPSALQDTQESSTTATEAAGPRSHSADSSSPGA</sequence>
<gene>
    <name type="primary">ZNRF3</name>
    <name type="synonym">KIAA1133</name>
    <name type="synonym">RNF203</name>
</gene>
<reference key="1">
    <citation type="journal article" date="2004" name="Nat. Genet.">
        <title>Complete sequencing and characterization of 21,243 full-length human cDNAs.</title>
        <authorList>
            <person name="Ota T."/>
            <person name="Suzuki Y."/>
            <person name="Nishikawa T."/>
            <person name="Otsuki T."/>
            <person name="Sugiyama T."/>
            <person name="Irie R."/>
            <person name="Wakamatsu A."/>
            <person name="Hayashi K."/>
            <person name="Sato H."/>
            <person name="Nagai K."/>
            <person name="Kimura K."/>
            <person name="Makita H."/>
            <person name="Sekine M."/>
            <person name="Obayashi M."/>
            <person name="Nishi T."/>
            <person name="Shibahara T."/>
            <person name="Tanaka T."/>
            <person name="Ishii S."/>
            <person name="Yamamoto J."/>
            <person name="Saito K."/>
            <person name="Kawai Y."/>
            <person name="Isono Y."/>
            <person name="Nakamura Y."/>
            <person name="Nagahari K."/>
            <person name="Murakami K."/>
            <person name="Yasuda T."/>
            <person name="Iwayanagi T."/>
            <person name="Wagatsuma M."/>
            <person name="Shiratori A."/>
            <person name="Sudo H."/>
            <person name="Hosoiri T."/>
            <person name="Kaku Y."/>
            <person name="Kodaira H."/>
            <person name="Kondo H."/>
            <person name="Sugawara M."/>
            <person name="Takahashi M."/>
            <person name="Kanda K."/>
            <person name="Yokoi T."/>
            <person name="Furuya T."/>
            <person name="Kikkawa E."/>
            <person name="Omura Y."/>
            <person name="Abe K."/>
            <person name="Kamihara K."/>
            <person name="Katsuta N."/>
            <person name="Sato K."/>
            <person name="Tanikawa M."/>
            <person name="Yamazaki M."/>
            <person name="Ninomiya K."/>
            <person name="Ishibashi T."/>
            <person name="Yamashita H."/>
            <person name="Murakawa K."/>
            <person name="Fujimori K."/>
            <person name="Tanai H."/>
            <person name="Kimata M."/>
            <person name="Watanabe M."/>
            <person name="Hiraoka S."/>
            <person name="Chiba Y."/>
            <person name="Ishida S."/>
            <person name="Ono Y."/>
            <person name="Takiguchi S."/>
            <person name="Watanabe S."/>
            <person name="Yosida M."/>
            <person name="Hotuta T."/>
            <person name="Kusano J."/>
            <person name="Kanehori K."/>
            <person name="Takahashi-Fujii A."/>
            <person name="Hara H."/>
            <person name="Tanase T.-O."/>
            <person name="Nomura Y."/>
            <person name="Togiya S."/>
            <person name="Komai F."/>
            <person name="Hara R."/>
            <person name="Takeuchi K."/>
            <person name="Arita M."/>
            <person name="Imose N."/>
            <person name="Musashino K."/>
            <person name="Yuuki H."/>
            <person name="Oshima A."/>
            <person name="Sasaki N."/>
            <person name="Aotsuka S."/>
            <person name="Yoshikawa Y."/>
            <person name="Matsunawa H."/>
            <person name="Ichihara T."/>
            <person name="Shiohata N."/>
            <person name="Sano S."/>
            <person name="Moriya S."/>
            <person name="Momiyama H."/>
            <person name="Satoh N."/>
            <person name="Takami S."/>
            <person name="Terashima Y."/>
            <person name="Suzuki O."/>
            <person name="Nakagawa S."/>
            <person name="Senoh A."/>
            <person name="Mizoguchi H."/>
            <person name="Goto Y."/>
            <person name="Shimizu F."/>
            <person name="Wakebe H."/>
            <person name="Hishigaki H."/>
            <person name="Watanabe T."/>
            <person name="Sugiyama A."/>
            <person name="Takemoto M."/>
            <person name="Kawakami B."/>
            <person name="Yamazaki M."/>
            <person name="Watanabe K."/>
            <person name="Kumagai A."/>
            <person name="Itakura S."/>
            <person name="Fukuzumi Y."/>
            <person name="Fujimori Y."/>
            <person name="Komiyama M."/>
            <person name="Tashiro H."/>
            <person name="Tanigami A."/>
            <person name="Fujiwara T."/>
            <person name="Ono T."/>
            <person name="Yamada K."/>
            <person name="Fujii Y."/>
            <person name="Ozaki K."/>
            <person name="Hirao M."/>
            <person name="Ohmori Y."/>
            <person name="Kawabata A."/>
            <person name="Hikiji T."/>
            <person name="Kobatake N."/>
            <person name="Inagaki H."/>
            <person name="Ikema Y."/>
            <person name="Okamoto S."/>
            <person name="Okitani R."/>
            <person name="Kawakami T."/>
            <person name="Noguchi S."/>
            <person name="Itoh T."/>
            <person name="Shigeta K."/>
            <person name="Senba T."/>
            <person name="Matsumura K."/>
            <person name="Nakajima Y."/>
            <person name="Mizuno T."/>
            <person name="Morinaga M."/>
            <person name="Sasaki M."/>
            <person name="Togashi T."/>
            <person name="Oyama M."/>
            <person name="Hata H."/>
            <person name="Watanabe M."/>
            <person name="Komatsu T."/>
            <person name="Mizushima-Sugano J."/>
            <person name="Satoh T."/>
            <person name="Shirai Y."/>
            <person name="Takahashi Y."/>
            <person name="Nakagawa K."/>
            <person name="Okumura K."/>
            <person name="Nagase T."/>
            <person name="Nomura N."/>
            <person name="Kikuchi H."/>
            <person name="Masuho Y."/>
            <person name="Yamashita R."/>
            <person name="Nakai K."/>
            <person name="Yada T."/>
            <person name="Nakamura Y."/>
            <person name="Ohara O."/>
            <person name="Isogai T."/>
            <person name="Sugano S."/>
        </authorList>
    </citation>
    <scope>NUCLEOTIDE SEQUENCE [LARGE SCALE MRNA]</scope>
</reference>
<reference key="2">
    <citation type="journal article" date="1999" name="Nature">
        <title>The DNA sequence of human chromosome 22.</title>
        <authorList>
            <person name="Dunham I."/>
            <person name="Hunt A.R."/>
            <person name="Collins J.E."/>
            <person name="Bruskiewich R."/>
            <person name="Beare D.M."/>
            <person name="Clamp M."/>
            <person name="Smink L.J."/>
            <person name="Ainscough R."/>
            <person name="Almeida J.P."/>
            <person name="Babbage A.K."/>
            <person name="Bagguley C."/>
            <person name="Bailey J."/>
            <person name="Barlow K.F."/>
            <person name="Bates K.N."/>
            <person name="Beasley O.P."/>
            <person name="Bird C.P."/>
            <person name="Blakey S.E."/>
            <person name="Bridgeman A.M."/>
            <person name="Buck D."/>
            <person name="Burgess J."/>
            <person name="Burrill W.D."/>
            <person name="Burton J."/>
            <person name="Carder C."/>
            <person name="Carter N.P."/>
            <person name="Chen Y."/>
            <person name="Clark G."/>
            <person name="Clegg S.M."/>
            <person name="Cobley V.E."/>
            <person name="Cole C.G."/>
            <person name="Collier R.E."/>
            <person name="Connor R."/>
            <person name="Conroy D."/>
            <person name="Corby N.R."/>
            <person name="Coville G.J."/>
            <person name="Cox A.V."/>
            <person name="Davis J."/>
            <person name="Dawson E."/>
            <person name="Dhami P.D."/>
            <person name="Dockree C."/>
            <person name="Dodsworth S.J."/>
            <person name="Durbin R.M."/>
            <person name="Ellington A.G."/>
            <person name="Evans K.L."/>
            <person name="Fey J.M."/>
            <person name="Fleming K."/>
            <person name="French L."/>
            <person name="Garner A.A."/>
            <person name="Gilbert J.G.R."/>
            <person name="Goward M.E."/>
            <person name="Grafham D.V."/>
            <person name="Griffiths M.N.D."/>
            <person name="Hall C."/>
            <person name="Hall R.E."/>
            <person name="Hall-Tamlyn G."/>
            <person name="Heathcott R.W."/>
            <person name="Ho S."/>
            <person name="Holmes S."/>
            <person name="Hunt S.E."/>
            <person name="Jones M.C."/>
            <person name="Kershaw J."/>
            <person name="Kimberley A.M."/>
            <person name="King A."/>
            <person name="Laird G.K."/>
            <person name="Langford C.F."/>
            <person name="Leversha M.A."/>
            <person name="Lloyd C."/>
            <person name="Lloyd D.M."/>
            <person name="Martyn I.D."/>
            <person name="Mashreghi-Mohammadi M."/>
            <person name="Matthews L.H."/>
            <person name="Mccann O.T."/>
            <person name="Mcclay J."/>
            <person name="Mclaren S."/>
            <person name="McMurray A.A."/>
            <person name="Milne S.A."/>
            <person name="Mortimore B.J."/>
            <person name="Odell C.N."/>
            <person name="Pavitt R."/>
            <person name="Pearce A.V."/>
            <person name="Pearson D."/>
            <person name="Phillimore B.J.C.T."/>
            <person name="Phillips S.H."/>
            <person name="Plumb R.W."/>
            <person name="Ramsay H."/>
            <person name="Ramsey Y."/>
            <person name="Rogers L."/>
            <person name="Ross M.T."/>
            <person name="Scott C.E."/>
            <person name="Sehra H.K."/>
            <person name="Skuce C.D."/>
            <person name="Smalley S."/>
            <person name="Smith M.L."/>
            <person name="Soderlund C."/>
            <person name="Spragon L."/>
            <person name="Steward C.A."/>
            <person name="Sulston J.E."/>
            <person name="Swann R.M."/>
            <person name="Vaudin M."/>
            <person name="Wall M."/>
            <person name="Wallis J.M."/>
            <person name="Whiteley M.N."/>
            <person name="Willey D.L."/>
            <person name="Williams L."/>
            <person name="Williams S.A."/>
            <person name="Williamson H."/>
            <person name="Wilmer T.E."/>
            <person name="Wilming L."/>
            <person name="Wright C.L."/>
            <person name="Hubbard T."/>
            <person name="Bentley D.R."/>
            <person name="Beck S."/>
            <person name="Rogers J."/>
            <person name="Shimizu N."/>
            <person name="Minoshima S."/>
            <person name="Kawasaki K."/>
            <person name="Sasaki T."/>
            <person name="Asakawa S."/>
            <person name="Kudoh J."/>
            <person name="Shintani A."/>
            <person name="Shibuya K."/>
            <person name="Yoshizaki Y."/>
            <person name="Aoki N."/>
            <person name="Mitsuyama S."/>
            <person name="Roe B.A."/>
            <person name="Chen F."/>
            <person name="Chu L."/>
            <person name="Crabtree J."/>
            <person name="Deschamps S."/>
            <person name="Do A."/>
            <person name="Do T."/>
            <person name="Dorman A."/>
            <person name="Fang F."/>
            <person name="Fu Y."/>
            <person name="Hu P."/>
            <person name="Hua A."/>
            <person name="Kenton S."/>
            <person name="Lai H."/>
            <person name="Lao H.I."/>
            <person name="Lewis J."/>
            <person name="Lewis S."/>
            <person name="Lin S.-P."/>
            <person name="Loh P."/>
            <person name="Malaj E."/>
            <person name="Nguyen T."/>
            <person name="Pan H."/>
            <person name="Phan S."/>
            <person name="Qi S."/>
            <person name="Qian Y."/>
            <person name="Ray L."/>
            <person name="Ren Q."/>
            <person name="Shaull S."/>
            <person name="Sloan D."/>
            <person name="Song L."/>
            <person name="Wang Q."/>
            <person name="Wang Y."/>
            <person name="Wang Z."/>
            <person name="White J."/>
            <person name="Willingham D."/>
            <person name="Wu H."/>
            <person name="Yao Z."/>
            <person name="Zhan M."/>
            <person name="Zhang G."/>
            <person name="Chissoe S."/>
            <person name="Murray J."/>
            <person name="Miller N."/>
            <person name="Minx P."/>
            <person name="Fulton R."/>
            <person name="Johnson D."/>
            <person name="Bemis G."/>
            <person name="Bentley D."/>
            <person name="Bradshaw H."/>
            <person name="Bourne S."/>
            <person name="Cordes M."/>
            <person name="Du Z."/>
            <person name="Fulton L."/>
            <person name="Goela D."/>
            <person name="Graves T."/>
            <person name="Hawkins J."/>
            <person name="Hinds K."/>
            <person name="Kemp K."/>
            <person name="Latreille P."/>
            <person name="Layman D."/>
            <person name="Ozersky P."/>
            <person name="Rohlfing T."/>
            <person name="Scheet P."/>
            <person name="Walker C."/>
            <person name="Wamsley A."/>
            <person name="Wohldmann P."/>
            <person name="Pepin K."/>
            <person name="Nelson J."/>
            <person name="Korf I."/>
            <person name="Bedell J.A."/>
            <person name="Hillier L.W."/>
            <person name="Mardis E."/>
            <person name="Waterston R."/>
            <person name="Wilson R."/>
            <person name="Emanuel B.S."/>
            <person name="Shaikh T."/>
            <person name="Kurahashi H."/>
            <person name="Saitta S."/>
            <person name="Budarf M.L."/>
            <person name="McDermid H.E."/>
            <person name="Johnson A."/>
            <person name="Wong A.C.C."/>
            <person name="Morrow B.E."/>
            <person name="Edelmann L."/>
            <person name="Kim U.J."/>
            <person name="Shizuya H."/>
            <person name="Simon M.I."/>
            <person name="Dumanski J.P."/>
            <person name="Peyrard M."/>
            <person name="Kedra D."/>
            <person name="Seroussi E."/>
            <person name="Fransson I."/>
            <person name="Tapia I."/>
            <person name="Bruder C.E."/>
            <person name="O'Brien K.P."/>
            <person name="Wilkinson P."/>
            <person name="Bodenteich A."/>
            <person name="Hartman K."/>
            <person name="Hu X."/>
            <person name="Khan A.S."/>
            <person name="Lane L."/>
            <person name="Tilahun Y."/>
            <person name="Wright H."/>
        </authorList>
    </citation>
    <scope>NUCLEOTIDE SEQUENCE [LARGE SCALE GENOMIC DNA]</scope>
</reference>
<reference key="3">
    <citation type="journal article" date="1999" name="DNA Res.">
        <title>Characterization of cDNA clones selected by the GeneMark analysis from size-fractionated cDNA libraries from human brain.</title>
        <authorList>
            <person name="Hirosawa M."/>
            <person name="Nagase T."/>
            <person name="Ishikawa K."/>
            <person name="Kikuno R."/>
            <person name="Nomura N."/>
            <person name="Ohara O."/>
        </authorList>
    </citation>
    <scope>NUCLEOTIDE SEQUENCE [LARGE SCALE MRNA] OF 46-936 (ISOFORM 1)</scope>
    <source>
        <tissue>Brain</tissue>
    </source>
</reference>
<reference key="4">
    <citation type="journal article" date="2002" name="DNA Res.">
        <title>Construction of expression-ready cDNA clones for KIAA genes: manual curation of 330 KIAA cDNA clones.</title>
        <authorList>
            <person name="Nakajima D."/>
            <person name="Okazaki N."/>
            <person name="Yamakawa H."/>
            <person name="Kikuno R."/>
            <person name="Ohara O."/>
            <person name="Nagase T."/>
        </authorList>
    </citation>
    <scope>SEQUENCE REVISION</scope>
</reference>
<reference key="5">
    <citation type="journal article" date="2004" name="Genome Biol.">
        <title>A genome annotation-driven approach to cloning the human ORFeome.</title>
        <authorList>
            <person name="Collins J.E."/>
            <person name="Wright C.L."/>
            <person name="Edwards C.A."/>
            <person name="Davis M.P."/>
            <person name="Grinham J.A."/>
            <person name="Cole C.G."/>
            <person name="Goward M.E."/>
            <person name="Aguado B."/>
            <person name="Mallya M."/>
            <person name="Mokrab Y."/>
            <person name="Huckle E.J."/>
            <person name="Beare D.M."/>
            <person name="Dunham I."/>
        </authorList>
    </citation>
    <scope>NUCLEOTIDE SEQUENCE [LARGE SCALE MRNA] OF 77-936 (ISOFORM 1)</scope>
</reference>
<reference key="6">
    <citation type="journal article" date="2004" name="Genome Res.">
        <title>The status, quality, and expansion of the NIH full-length cDNA project: the Mammalian Gene Collection (MGC).</title>
        <authorList>
            <consortium name="The MGC Project Team"/>
        </authorList>
    </citation>
    <scope>NUCLEOTIDE SEQUENCE [LARGE SCALE MRNA] OF 284-936</scope>
    <source>
        <tissue>Brain</tissue>
        <tissue>Muscle</tissue>
    </source>
</reference>
<reference key="7">
    <citation type="journal article" date="2012" name="Nature">
        <title>ZNRF3 promotes Wnt receptor turnover in an R-spondin-sensitive manner.</title>
        <authorList>
            <person name="Hao H.X."/>
            <person name="Xie Y."/>
            <person name="Zhang Y."/>
            <person name="Charlat O."/>
            <person name="Oster E."/>
            <person name="Avello M."/>
            <person name="Lei H."/>
            <person name="Mickanin C."/>
            <person name="Liu D."/>
            <person name="Ruffner H."/>
            <person name="Mao X."/>
            <person name="Ma Q."/>
            <person name="Zamponi R."/>
            <person name="Bouwmeester T."/>
            <person name="Finan P.M."/>
            <person name="Kirschner M.W."/>
            <person name="Porter J.A."/>
            <person name="Serluca F.C."/>
            <person name="Cong F."/>
        </authorList>
    </citation>
    <scope>FUNCTION</scope>
    <scope>SUBCELLULAR LOCATION</scope>
    <scope>ACTIVITY REGULATION</scope>
    <scope>INTERACTION WITH FZD4; FZD5; FZD6; FZD8; LRP6 AND RSPO1</scope>
    <scope>MUTAGENESIS OF PRO-103</scope>
</reference>
<reference key="8">
    <citation type="journal article" date="2018" name="Nature">
        <title>RSPO2 inhibition of RNF43 and ZNRF3 governs limb development independently of LGR4/5/6.</title>
        <authorList>
            <person name="Szenker-Ravi E."/>
            <person name="Altunoglu U."/>
            <person name="Leushacke M."/>
            <person name="Bosso-Lefevre C."/>
            <person name="Khatoo M."/>
            <person name="Thi Tran H."/>
            <person name="Naert T."/>
            <person name="Noelanders R."/>
            <person name="Hajamohideen A."/>
            <person name="Beneteau C."/>
            <person name="de Sousa S.B."/>
            <person name="Karaman B."/>
            <person name="Latypova X."/>
            <person name="Basaran S."/>
            <person name="Yuecel E.B."/>
            <person name="Tan T.T."/>
            <person name="Vlaminck L."/>
            <person name="Nayak S.S."/>
            <person name="Shukla A."/>
            <person name="Girisha K.M."/>
            <person name="Le Caignec C."/>
            <person name="Soshnikova N."/>
            <person name="Uyguner Z.O."/>
            <person name="Vleminckx K."/>
            <person name="Barker N."/>
            <person name="Kayserili H."/>
            <person name="Reversade B."/>
        </authorList>
    </citation>
    <scope>INTERACTION WITH RSPO2</scope>
</reference>
<reference key="9">
    <citation type="journal article" date="2019" name="Science">
        <title>LMBR1L regulates lymphopoiesis through Wnt/beta-catenin signaling.</title>
        <authorList>
            <person name="Choi J.H."/>
            <person name="Zhong X."/>
            <person name="McAlpine W."/>
            <person name="Liao T.C."/>
            <person name="Zhang D."/>
            <person name="Fang B."/>
            <person name="Russell J."/>
            <person name="Ludwig S."/>
            <person name="Nair-Gill E."/>
            <person name="Zhang Z."/>
            <person name="Wang K.W."/>
            <person name="Misawa T."/>
            <person name="Zhan X."/>
            <person name="Choi M."/>
            <person name="Wang T."/>
            <person name="Li X."/>
            <person name="Tang M."/>
            <person name="Sun Q."/>
            <person name="Yu L."/>
            <person name="Murray A.R."/>
            <person name="Moresco E.M.Y."/>
            <person name="Beutler B."/>
        </authorList>
    </citation>
    <scope>INTERACTION WITH LMBR1L</scope>
</reference>
<comment type="function">
    <text evidence="1 5">E3 ubiquitin-protein ligase that acts as a negative regulator of the Wnt signaling pathway by mediating the ubiquitination and subsequent degradation of Wnt receptor complex components Frizzled and LRP6. Acts on both canonical and non-canonical Wnt signaling pathway. Acts as a tumor suppressor in the intestinal stem cell zone by inhibiting the Wnt signaling pathway, thereby restricting the size of the intestinal stem cell zone (PubMed:22575959). Along with RSPO2 and RNF43, constitutes a master switch that governs limb specification (By similarity).</text>
</comment>
<comment type="catalytic activity">
    <reaction>
        <text>S-ubiquitinyl-[E2 ubiquitin-conjugating enzyme]-L-cysteine + [acceptor protein]-L-lysine = [E2 ubiquitin-conjugating enzyme]-L-cysteine + N(6)-ubiquitinyl-[acceptor protein]-L-lysine.</text>
        <dbReference type="EC" id="2.3.2.27"/>
    </reaction>
</comment>
<comment type="activity regulation">
    <text evidence="5">Negatively regulated by R-spondin proteins such as RSPO1: interaction with RSPO1 induces the indirect association between ZNRF3 and LGR4, promoting membrane clearance of ZNRF3.</text>
</comment>
<comment type="pathway">
    <text>Protein modification; protein ubiquitination.</text>
</comment>
<comment type="subunit">
    <text evidence="5 6 8">Interacts with LRP6, FZD4, FZD5, FZD6 and FZD8 (PubMed:22575959). Interacts with RSPO1; interaction promotes indirect interaction with LGR4 and membrane clearance of ZNRF3 (PubMed:22575959). Also interacts with RSPO2 (PubMed:29769720). Interacts with LMBR1L (PubMed:31073040).</text>
</comment>
<comment type="interaction">
    <interactant intactId="EBI-949772">
        <id>Q9ULT6</id>
    </interactant>
    <interactant intactId="EBI-8754490">
        <id>O60353</id>
        <label>FZD6</label>
    </interactant>
    <organismsDiffer>false</organismsDiffer>
    <experiments>2</experiments>
</comment>
<comment type="interaction">
    <interactant intactId="EBI-949772">
        <id>Q9ULT6</id>
    </interactant>
    <interactant intactId="EBI-10965764">
        <id>Q9BXB1</id>
        <label>LGR4</label>
    </interactant>
    <organismsDiffer>false</organismsDiffer>
    <experiments>2</experiments>
</comment>
<comment type="interaction">
    <interactant intactId="EBI-949772">
        <id>Q9ULT6</id>
    </interactant>
    <interactant intactId="EBI-910915">
        <id>O75581</id>
        <label>LRP6</label>
    </interactant>
    <organismsDiffer>false</organismsDiffer>
    <experiments>2</experiments>
</comment>
<comment type="interaction">
    <interactant intactId="EBI-949772">
        <id>Q9ULT6</id>
    </interactant>
    <interactant intactId="EBI-10045219">
        <id>Q2MKA7</id>
        <label>RSPO1</label>
    </interactant>
    <organismsDiffer>false</organismsDiffer>
    <experiments>6</experiments>
</comment>
<comment type="interaction">
    <interactant intactId="EBI-949772">
        <id>Q9ULT6</id>
    </interactant>
    <interactant intactId="EBI-10243654">
        <id>Q5BVD1</id>
        <label>TTMP</label>
    </interactant>
    <organismsDiffer>false</organismsDiffer>
    <experiments>3</experiments>
</comment>
<comment type="subcellular location">
    <subcellularLocation>
        <location evidence="5">Cell membrane</location>
        <topology evidence="2">Single-pass type I membrane protein</topology>
    </subcellularLocation>
</comment>
<comment type="alternative products">
    <event type="alternative splicing"/>
    <isoform>
        <id>Q9ULT6-1</id>
        <name>1</name>
        <sequence type="displayed"/>
    </isoform>
    <isoform>
        <id>Q9ULT6-2</id>
        <name>2</name>
        <sequence type="described" ref="VSP_044043"/>
    </isoform>
</comment>
<comment type="similarity">
    <text evidence="7">Belongs to the ZNRF3 family.</text>
</comment>
<comment type="sequence caution" evidence="7">
    <conflict type="erroneous initiation">
        <sequence resource="EMBL-CDS" id="CAG30283"/>
    </conflict>
    <text>Truncated N-terminus.</text>
</comment>